<comment type="function">
    <text evidence="1">Plays a role in viral genome replication by driving entry of quiescent cells into the cell cycle. Stimulation of progression from G1 to S phase allows the virus to efficiently use the cellular DNA replicating machinery to achieve viral genome replication. E7 protein has both transforming and trans-activating activities. Induces the disassembly of the E2F1 transcription factor from RB1, with subsequent transcriptional activation of E2F1-regulated S-phase genes. Interferes with host histone deacetylation mediated by HDAC1 and HDAC2, leading to transcription activation. Also plays a role in the inhibition of both antiviral and antiproliferative functions of host interferon alpha. Interaction with host TMEM173/STING impairs the ability of TMEM173/STING to sense cytosolic DNA and promote the production of type I interferon (IFN-alpha and IFN-beta).</text>
</comment>
<comment type="subunit">
    <text evidence="1">Homodimer. Homooligomer. Interacts with host RB1; this interaction induces dissociation of RB1-E2F1 complex thereby disrupting RB1 activity. Interacts with host EP300; this interaction represses EP300 transcriptional activity. Interacts with protein E2; this interaction inhibits E7 oncogenic activity. Interacts with host TMEM173/STING; this interaction impairs the ability of TMEM173/STING to sense cytosolic DNA and promote the production of type I interferon (IFN-alpha and IFN-beta).</text>
</comment>
<comment type="subcellular location">
    <subcellularLocation>
        <location evidence="1">Host cytoplasm</location>
    </subcellularLocation>
    <subcellularLocation>
        <location evidence="1">Host nucleus</location>
    </subcellularLocation>
    <text evidence="1">Predominantly found in the host nucleus.</text>
</comment>
<comment type="domain">
    <text evidence="1">The E7 terminal domain is an intrinsically disordered domain, whose flexibility and conformational transitions confer target adaptability to the oncoprotein. It allows adaptation to a variety of protein targets and exposes the PEST degradation sequence that regulates its turnover in the cell.</text>
</comment>
<comment type="PTM">
    <text evidence="1">Highly phosphorylated.</text>
</comment>
<comment type="similarity">
    <text evidence="1">Belongs to the papillomaviridae E7 protein family.</text>
</comment>
<keyword id="KW-0010">Activator</keyword>
<keyword id="KW-0238">DNA-binding</keyword>
<keyword id="KW-0244">Early protein</keyword>
<keyword id="KW-1078">G1/S host cell cycle checkpoint dysregulation by virus</keyword>
<keyword id="KW-1035">Host cytoplasm</keyword>
<keyword id="KW-1048">Host nucleus</keyword>
<keyword id="KW-0945">Host-virus interaction</keyword>
<keyword id="KW-1090">Inhibition of host innate immune response by virus</keyword>
<keyword id="KW-1114">Inhibition of host interferon signaling pathway by virus</keyword>
<keyword id="KW-0922">Interferon antiviral system evasion</keyword>
<keyword id="KW-0479">Metal-binding</keyword>
<keyword id="KW-1121">Modulation of host cell cycle by virus</keyword>
<keyword id="KW-0553">Oncogene</keyword>
<keyword id="KW-1185">Reference proteome</keyword>
<keyword id="KW-0804">Transcription</keyword>
<keyword id="KW-0805">Transcription regulation</keyword>
<keyword id="KW-0899">Viral immunoevasion</keyword>
<keyword id="KW-0862">Zinc</keyword>
<keyword id="KW-0863">Zinc-finger</keyword>
<name>VE7_HPV07</name>
<accession>P36816</accession>
<organism>
    <name type="scientific">Human papillomavirus 7</name>
    <dbReference type="NCBI Taxonomy" id="10620"/>
    <lineage>
        <taxon>Viruses</taxon>
        <taxon>Monodnaviria</taxon>
        <taxon>Shotokuvirae</taxon>
        <taxon>Cossaviricota</taxon>
        <taxon>Papovaviricetes</taxon>
        <taxon>Zurhausenvirales</taxon>
        <taxon>Papillomaviridae</taxon>
        <taxon>Firstpapillomavirinae</taxon>
        <taxon>Alphapapillomavirus</taxon>
        <taxon>Alphapapillomavirus 8</taxon>
    </lineage>
</organism>
<organismHost>
    <name type="scientific">Homo sapiens</name>
    <name type="common">Human</name>
    <dbReference type="NCBI Taxonomy" id="9606"/>
</organismHost>
<sequence length="111" mass="12460">MHGERPTLGDIVLDLQPEPVSLSCNEQLDSSDSEDDHEQDQLDSSHNRQREQPTQQDLQVNLQSFKIVTHCVFCHCLVRLVVHCTATDIRQVHQLLMGTLNIVCPNCAATA</sequence>
<proteinExistence type="inferred from homology"/>
<reference key="1">
    <citation type="journal article" date="1994" name="Curr. Top. Microbiol. Immunol.">
        <title>Primer-directed sequencing of human papillomavirus types.</title>
        <authorList>
            <person name="Delius H."/>
            <person name="Hofmann B."/>
        </authorList>
    </citation>
    <scope>NUCLEOTIDE SEQUENCE [GENOMIC DNA]</scope>
</reference>
<reference key="2">
    <citation type="journal article" date="2002" name="Rev. Med. Virol.">
        <title>Interactions of SV40 large T antigen and other viral proteins with retinoblastoma tumour suppressor.</title>
        <authorList>
            <person name="Lee C."/>
            <person name="Cho Y."/>
        </authorList>
    </citation>
    <scope>REVIEW</scope>
</reference>
<gene>
    <name evidence="1" type="primary">E7</name>
</gene>
<evidence type="ECO:0000255" key="1">
    <source>
        <dbReference type="HAMAP-Rule" id="MF_04004"/>
    </source>
</evidence>
<evidence type="ECO:0000256" key="2">
    <source>
        <dbReference type="SAM" id="MobiDB-lite"/>
    </source>
</evidence>
<feature type="chain" id="PRO_0000133406" description="Protein E7">
    <location>
        <begin position="1"/>
        <end position="111"/>
    </location>
</feature>
<feature type="zinc finger region" evidence="1">
    <location>
        <begin position="71"/>
        <end position="107"/>
    </location>
</feature>
<feature type="region of interest" description="E7 terminal domain" evidence="1">
    <location>
        <begin position="1"/>
        <end position="44"/>
    </location>
</feature>
<feature type="region of interest" description="Disordered" evidence="2">
    <location>
        <begin position="24"/>
        <end position="55"/>
    </location>
</feature>
<feature type="short sequence motif" description="LXCXE motif; interaction with host RB1 and TMEM173/STING" evidence="1">
    <location>
        <begin position="22"/>
        <end position="26"/>
    </location>
</feature>
<feature type="short sequence motif" description="Nuclear export signal" evidence="1">
    <location>
        <begin position="89"/>
        <end position="97"/>
    </location>
</feature>
<feature type="compositionally biased region" description="Acidic residues" evidence="2">
    <location>
        <begin position="29"/>
        <end position="38"/>
    </location>
</feature>
<feature type="compositionally biased region" description="Basic and acidic residues" evidence="2">
    <location>
        <begin position="39"/>
        <end position="51"/>
    </location>
</feature>
<protein>
    <recommendedName>
        <fullName evidence="1">Protein E7</fullName>
    </recommendedName>
</protein>
<dbReference type="EMBL" id="X74463">
    <property type="protein sequence ID" value="CAA52477.1"/>
    <property type="molecule type" value="Genomic_DNA"/>
</dbReference>
<dbReference type="PIR" id="S36585">
    <property type="entry name" value="S36585"/>
</dbReference>
<dbReference type="RefSeq" id="NP_041855.1">
    <property type="nucleotide sequence ID" value="NC_001595.1"/>
</dbReference>
<dbReference type="SMR" id="P36816"/>
<dbReference type="GeneID" id="1489473"/>
<dbReference type="KEGG" id="vg:1489473"/>
<dbReference type="OrthoDB" id="28045at10239"/>
<dbReference type="Proteomes" id="UP000008226">
    <property type="component" value="Genome"/>
</dbReference>
<dbReference type="GO" id="GO:0030430">
    <property type="term" value="C:host cell cytoplasm"/>
    <property type="evidence" value="ECO:0007669"/>
    <property type="project" value="UniProtKB-SubCell"/>
</dbReference>
<dbReference type="GO" id="GO:0042025">
    <property type="term" value="C:host cell nucleus"/>
    <property type="evidence" value="ECO:0007669"/>
    <property type="project" value="UniProtKB-SubCell"/>
</dbReference>
<dbReference type="GO" id="GO:0003677">
    <property type="term" value="F:DNA binding"/>
    <property type="evidence" value="ECO:0007669"/>
    <property type="project" value="UniProtKB-UniRule"/>
</dbReference>
<dbReference type="GO" id="GO:0003700">
    <property type="term" value="F:DNA-binding transcription factor activity"/>
    <property type="evidence" value="ECO:0007669"/>
    <property type="project" value="UniProtKB-UniRule"/>
</dbReference>
<dbReference type="GO" id="GO:0019904">
    <property type="term" value="F:protein domain specific binding"/>
    <property type="evidence" value="ECO:0007669"/>
    <property type="project" value="UniProtKB-UniRule"/>
</dbReference>
<dbReference type="GO" id="GO:0008270">
    <property type="term" value="F:zinc ion binding"/>
    <property type="evidence" value="ECO:0007669"/>
    <property type="project" value="UniProtKB-KW"/>
</dbReference>
<dbReference type="GO" id="GO:0006351">
    <property type="term" value="P:DNA-templated transcription"/>
    <property type="evidence" value="ECO:0007669"/>
    <property type="project" value="UniProtKB-UniRule"/>
</dbReference>
<dbReference type="GO" id="GO:0039645">
    <property type="term" value="P:symbiont-mediated perturbation of host cell cycle G1/S transition checkpoint"/>
    <property type="evidence" value="ECO:0007669"/>
    <property type="project" value="UniProtKB-UniRule"/>
</dbReference>
<dbReference type="GO" id="GO:0052170">
    <property type="term" value="P:symbiont-mediated suppression of host innate immune response"/>
    <property type="evidence" value="ECO:0007669"/>
    <property type="project" value="UniProtKB-KW"/>
</dbReference>
<dbReference type="GO" id="GO:0039502">
    <property type="term" value="P:symbiont-mediated suppression of host type I interferon-mediated signaling pathway"/>
    <property type="evidence" value="ECO:0007669"/>
    <property type="project" value="UniProtKB-UniRule"/>
</dbReference>
<dbReference type="Gene3D" id="3.30.160.330">
    <property type="match status" value="1"/>
</dbReference>
<dbReference type="HAMAP" id="MF_04004">
    <property type="entry name" value="PPV_E7"/>
    <property type="match status" value="1"/>
</dbReference>
<dbReference type="InterPro" id="IPR000148">
    <property type="entry name" value="Papilloma_E7"/>
</dbReference>
<dbReference type="Pfam" id="PF00527">
    <property type="entry name" value="E7"/>
    <property type="match status" value="1"/>
</dbReference>
<dbReference type="PIRSF" id="PIRSF003407">
    <property type="entry name" value="Papvi_E7"/>
    <property type="match status" value="1"/>
</dbReference>
<dbReference type="SUPFAM" id="SSF161234">
    <property type="entry name" value="E7 C-terminal domain-like"/>
    <property type="match status" value="1"/>
</dbReference>